<organism>
    <name type="scientific">Clostridium acetobutylicum (strain ATCC 824 / DSM 792 / JCM 1419 / IAM 19013 / LMG 5710 / NBRC 13948 / NRRL B-527 / VKM B-1787 / 2291 / W)</name>
    <dbReference type="NCBI Taxonomy" id="272562"/>
    <lineage>
        <taxon>Bacteria</taxon>
        <taxon>Bacillati</taxon>
        <taxon>Bacillota</taxon>
        <taxon>Clostridia</taxon>
        <taxon>Eubacteriales</taxon>
        <taxon>Clostridiaceae</taxon>
        <taxon>Clostridium</taxon>
    </lineage>
</organism>
<evidence type="ECO:0000255" key="1">
    <source>
        <dbReference type="HAMAP-Rule" id="MF_00384"/>
    </source>
</evidence>
<name>KHSE_CLOAB</name>
<protein>
    <recommendedName>
        <fullName evidence="1">Homoserine kinase</fullName>
        <shortName evidence="1">HK</shortName>
        <shortName evidence="1">HSK</shortName>
        <ecNumber evidence="1">2.7.1.39</ecNumber>
    </recommendedName>
</protein>
<keyword id="KW-0028">Amino-acid biosynthesis</keyword>
<keyword id="KW-0067">ATP-binding</keyword>
<keyword id="KW-0963">Cytoplasm</keyword>
<keyword id="KW-0418">Kinase</keyword>
<keyword id="KW-0547">Nucleotide-binding</keyword>
<keyword id="KW-1185">Reference proteome</keyword>
<keyword id="KW-0791">Threonine biosynthesis</keyword>
<keyword id="KW-0808">Transferase</keyword>
<reference key="1">
    <citation type="journal article" date="2001" name="J. Bacteriol.">
        <title>Genome sequence and comparative analysis of the solvent-producing bacterium Clostridium acetobutylicum.</title>
        <authorList>
            <person name="Noelling J."/>
            <person name="Breton G."/>
            <person name="Omelchenko M.V."/>
            <person name="Makarova K.S."/>
            <person name="Zeng Q."/>
            <person name="Gibson R."/>
            <person name="Lee H.M."/>
            <person name="Dubois J."/>
            <person name="Qiu D."/>
            <person name="Hitti J."/>
            <person name="Wolf Y.I."/>
            <person name="Tatusov R.L."/>
            <person name="Sabathe F."/>
            <person name="Doucette-Stamm L.A."/>
            <person name="Soucaille P."/>
            <person name="Daly M.J."/>
            <person name="Bennett G.N."/>
            <person name="Koonin E.V."/>
            <person name="Smith D.R."/>
        </authorList>
    </citation>
    <scope>NUCLEOTIDE SEQUENCE [LARGE SCALE GENOMIC DNA]</scope>
    <source>
        <strain>ATCC 824 / DSM 792 / JCM 1419 / IAM 19013 / LMG 5710 / NBRC 13948 / NRRL B-527 / VKM B-1787 / 2291 / W</strain>
    </source>
</reference>
<accession>Q97JN8</accession>
<sequence>MIRVKIPATSANMGAGFDTLGMALKLYNEITIEETEGETEIKLLGGELDRNYRNNLTYISIIKVYEFFNKEFKGFKIDMSKTNIPLSRGLGSSAACIVGGIVGANALLNEKMTIKDMLKIAVDIEGHPDNVAPALLGGVIISIKDMENIIYSRINVKSQLKYAVMVPDFKVSTELSRKVLPNEYSREDALFNISRCSMLVSALNNGENEKLRYLFEDKIHQPYRKKLINNIDSIFLKAKEYGSLGEFISGSGSTLIAVLEEADENFILKMKTYLDSLKDGWRIFEVENDNNGAVII</sequence>
<proteinExistence type="inferred from homology"/>
<dbReference type="EC" id="2.7.1.39" evidence="1"/>
<dbReference type="EMBL" id="AE001437">
    <property type="protein sequence ID" value="AAK79207.1"/>
    <property type="molecule type" value="Genomic_DNA"/>
</dbReference>
<dbReference type="PIR" id="D97052">
    <property type="entry name" value="D97052"/>
</dbReference>
<dbReference type="RefSeq" id="NP_347867.1">
    <property type="nucleotide sequence ID" value="NC_003030.1"/>
</dbReference>
<dbReference type="RefSeq" id="WP_010964548.1">
    <property type="nucleotide sequence ID" value="NC_003030.1"/>
</dbReference>
<dbReference type="SMR" id="Q97JN8"/>
<dbReference type="STRING" id="272562.CA_C1235"/>
<dbReference type="KEGG" id="cac:CA_C1235"/>
<dbReference type="PATRIC" id="fig|272562.8.peg.1435"/>
<dbReference type="eggNOG" id="COG0083">
    <property type="taxonomic scope" value="Bacteria"/>
</dbReference>
<dbReference type="HOGENOM" id="CLU_041243_0_0_9"/>
<dbReference type="OrthoDB" id="9769912at2"/>
<dbReference type="UniPathway" id="UPA00050">
    <property type="reaction ID" value="UER00064"/>
</dbReference>
<dbReference type="Proteomes" id="UP000000814">
    <property type="component" value="Chromosome"/>
</dbReference>
<dbReference type="GO" id="GO:0005737">
    <property type="term" value="C:cytoplasm"/>
    <property type="evidence" value="ECO:0007669"/>
    <property type="project" value="UniProtKB-SubCell"/>
</dbReference>
<dbReference type="GO" id="GO:0005524">
    <property type="term" value="F:ATP binding"/>
    <property type="evidence" value="ECO:0007669"/>
    <property type="project" value="UniProtKB-UniRule"/>
</dbReference>
<dbReference type="GO" id="GO:0004413">
    <property type="term" value="F:homoserine kinase activity"/>
    <property type="evidence" value="ECO:0007669"/>
    <property type="project" value="UniProtKB-UniRule"/>
</dbReference>
<dbReference type="GO" id="GO:0009088">
    <property type="term" value="P:threonine biosynthetic process"/>
    <property type="evidence" value="ECO:0007669"/>
    <property type="project" value="UniProtKB-UniRule"/>
</dbReference>
<dbReference type="Gene3D" id="3.30.230.10">
    <property type="match status" value="1"/>
</dbReference>
<dbReference type="Gene3D" id="3.30.70.890">
    <property type="entry name" value="GHMP kinase, C-terminal domain"/>
    <property type="match status" value="1"/>
</dbReference>
<dbReference type="HAMAP" id="MF_00384">
    <property type="entry name" value="Homoser_kinase"/>
    <property type="match status" value="1"/>
</dbReference>
<dbReference type="InterPro" id="IPR013750">
    <property type="entry name" value="GHMP_kinase_C_dom"/>
</dbReference>
<dbReference type="InterPro" id="IPR036554">
    <property type="entry name" value="GHMP_kinase_C_sf"/>
</dbReference>
<dbReference type="InterPro" id="IPR006204">
    <property type="entry name" value="GHMP_kinase_N_dom"/>
</dbReference>
<dbReference type="InterPro" id="IPR006203">
    <property type="entry name" value="GHMP_knse_ATP-bd_CS"/>
</dbReference>
<dbReference type="InterPro" id="IPR000870">
    <property type="entry name" value="Homoserine_kinase"/>
</dbReference>
<dbReference type="InterPro" id="IPR020568">
    <property type="entry name" value="Ribosomal_Su5_D2-typ_SF"/>
</dbReference>
<dbReference type="InterPro" id="IPR014721">
    <property type="entry name" value="Ribsml_uS5_D2-typ_fold_subgr"/>
</dbReference>
<dbReference type="NCBIfam" id="TIGR00191">
    <property type="entry name" value="thrB"/>
    <property type="match status" value="1"/>
</dbReference>
<dbReference type="PANTHER" id="PTHR20861:SF1">
    <property type="entry name" value="HOMOSERINE KINASE"/>
    <property type="match status" value="1"/>
</dbReference>
<dbReference type="PANTHER" id="PTHR20861">
    <property type="entry name" value="HOMOSERINE/4-DIPHOSPHOCYTIDYL-2-C-METHYL-D-ERYTHRITOL KINASE"/>
    <property type="match status" value="1"/>
</dbReference>
<dbReference type="Pfam" id="PF08544">
    <property type="entry name" value="GHMP_kinases_C"/>
    <property type="match status" value="1"/>
</dbReference>
<dbReference type="Pfam" id="PF00288">
    <property type="entry name" value="GHMP_kinases_N"/>
    <property type="match status" value="1"/>
</dbReference>
<dbReference type="PIRSF" id="PIRSF000676">
    <property type="entry name" value="Homoser_kin"/>
    <property type="match status" value="1"/>
</dbReference>
<dbReference type="PRINTS" id="PR00958">
    <property type="entry name" value="HOMSERKINASE"/>
</dbReference>
<dbReference type="SUPFAM" id="SSF55060">
    <property type="entry name" value="GHMP Kinase, C-terminal domain"/>
    <property type="match status" value="1"/>
</dbReference>
<dbReference type="SUPFAM" id="SSF54211">
    <property type="entry name" value="Ribosomal protein S5 domain 2-like"/>
    <property type="match status" value="1"/>
</dbReference>
<dbReference type="PROSITE" id="PS00627">
    <property type="entry name" value="GHMP_KINASES_ATP"/>
    <property type="match status" value="1"/>
</dbReference>
<gene>
    <name evidence="1" type="primary">thrB</name>
    <name type="ordered locus">CA_C1235</name>
</gene>
<comment type="function">
    <text evidence="1">Catalyzes the ATP-dependent phosphorylation of L-homoserine to L-homoserine phosphate.</text>
</comment>
<comment type="catalytic activity">
    <reaction evidence="1">
        <text>L-homoserine + ATP = O-phospho-L-homoserine + ADP + H(+)</text>
        <dbReference type="Rhea" id="RHEA:13985"/>
        <dbReference type="ChEBI" id="CHEBI:15378"/>
        <dbReference type="ChEBI" id="CHEBI:30616"/>
        <dbReference type="ChEBI" id="CHEBI:57476"/>
        <dbReference type="ChEBI" id="CHEBI:57590"/>
        <dbReference type="ChEBI" id="CHEBI:456216"/>
        <dbReference type="EC" id="2.7.1.39"/>
    </reaction>
</comment>
<comment type="pathway">
    <text evidence="1">Amino-acid biosynthesis; L-threonine biosynthesis; L-threonine from L-aspartate: step 4/5.</text>
</comment>
<comment type="subcellular location">
    <subcellularLocation>
        <location evidence="1">Cytoplasm</location>
    </subcellularLocation>
</comment>
<comment type="similarity">
    <text evidence="1">Belongs to the GHMP kinase family. Homoserine kinase subfamily.</text>
</comment>
<feature type="chain" id="PRO_0000156561" description="Homoserine kinase">
    <location>
        <begin position="1"/>
        <end position="296"/>
    </location>
</feature>
<feature type="binding site" evidence="1">
    <location>
        <begin position="85"/>
        <end position="95"/>
    </location>
    <ligand>
        <name>ATP</name>
        <dbReference type="ChEBI" id="CHEBI:30616"/>
    </ligand>
</feature>